<feature type="chain" id="PRO_0000051797" description="Cytochrome P450 3A14">
    <location>
        <begin position="1"/>
        <end position="503"/>
    </location>
</feature>
<feature type="binding site" description="axial binding residue" evidence="1">
    <location>
        <position position="442"/>
    </location>
    <ligand>
        <name>heme</name>
        <dbReference type="ChEBI" id="CHEBI:30413"/>
    </ligand>
    <ligandPart>
        <name>Fe</name>
        <dbReference type="ChEBI" id="CHEBI:18248"/>
    </ligandPart>
</feature>
<feature type="sequence conflict" description="In Ref. 1; BAA03865." evidence="2" ref="1">
    <original>S</original>
    <variation>P</variation>
    <location>
        <position position="121"/>
    </location>
</feature>
<feature type="sequence conflict" description="In Ref. 1; BAA03865." evidence="2" ref="1">
    <original>L</original>
    <variation>I</variation>
    <location>
        <position position="452"/>
    </location>
</feature>
<evidence type="ECO:0000250" key="1"/>
<evidence type="ECO:0000305" key="2"/>
<reference key="1">
    <citation type="submission" date="1993-11" db="EMBL/GenBank/DDBJ databases">
        <title>cDNA and deduced amino acid sequence of a novel cytochrome P450 from male guinea pig liver mRNA with high homology to CYP3A family.</title>
        <authorList>
            <person name="Mori T."/>
            <person name="Itoh S."/>
            <person name="Kamataki T."/>
        </authorList>
    </citation>
    <scope>NUCLEOTIDE SEQUENCE [MRNA]</scope>
    <source>
        <strain>Hartley</strain>
        <tissue>Liver</tissue>
    </source>
</reference>
<reference key="2">
    <citation type="journal article" date="1997" name="Arch. Biochem. Biophys.">
        <title>Regulation of CYP1A and CYP3A mRNAs by ascorbic acid in guinea pigs.</title>
        <authorList>
            <person name="Mori T."/>
            <person name="Itoh S."/>
            <person name="Ohgiya S."/>
            <person name="Ishizaki K."/>
            <person name="Kamataki T."/>
        </authorList>
    </citation>
    <scope>NUCLEOTIDE SEQUENCE [MRNA]</scope>
    <source>
        <strain>Hartley</strain>
        <tissue>Liver</tissue>
    </source>
</reference>
<sequence length="503" mass="58118">MDLVPSFSLETWVLLALSLVLLYRYATYSHGFFKKLGIPGPKPLPLFGNVLSYRKGMWSFDIECRKKYGNMWGLYDGPQPVLAITEPDMIKAVLVKECYSVFTNRRSLVPVGFMKKAVSLSEDEEWKRIRTQLSPNFTSGKLKEMFPIIKQYGDVLVKNLRQEAEKGKPVQLKEIFGAYSMDIIVATAFGVNVDSLNNPHDPFVSKARKLFRFDFLSPFLLSIVMFPFLTQLYEMLSISIFPRDSLKFFTKFVKKTKENHLESNKKQRVDFLQMMLNSQNFKDTESHKALSDVEILAQSIIFIFAGYETTSSTLSFIMYSLATHPDVQKKLQQEIDKTLPNKAFPTYDVMMEMEYLDMVVNETLRLYPVTNRIERMSKKDFEINGMSFPKGTGVMIPSFALHRDSKYWPEPDEFRPERFSKKNKENIDPYIYMPFGNGPRNCIGMRMALMNLKLALIRLLQNFSFYPCKETQIPLRLGSEALLQPAKPIILKVVSRDETIRGA</sequence>
<keyword id="KW-0256">Endoplasmic reticulum</keyword>
<keyword id="KW-0349">Heme</keyword>
<keyword id="KW-0408">Iron</keyword>
<keyword id="KW-0472">Membrane</keyword>
<keyword id="KW-0479">Metal-binding</keyword>
<keyword id="KW-0492">Microsome</keyword>
<keyword id="KW-0503">Monooxygenase</keyword>
<keyword id="KW-0560">Oxidoreductase</keyword>
<keyword id="KW-1185">Reference proteome</keyword>
<name>CP3AE_CAVPO</name>
<comment type="function">
    <text>Cytochromes P450 are a group of heme-thiolate monooxygenases. In liver microsomes, this enzyme is involved in an NADPH-dependent electron transport pathway. It oxidizes a variety of structurally unrelated compounds, including steroids, fatty acids, and xenobiotics.</text>
</comment>
<comment type="catalytic activity">
    <reaction>
        <text>an organic molecule + reduced [NADPH--hemoprotein reductase] + O2 = an alcohol + oxidized [NADPH--hemoprotein reductase] + H2O + H(+)</text>
        <dbReference type="Rhea" id="RHEA:17149"/>
        <dbReference type="Rhea" id="RHEA-COMP:11964"/>
        <dbReference type="Rhea" id="RHEA-COMP:11965"/>
        <dbReference type="ChEBI" id="CHEBI:15377"/>
        <dbReference type="ChEBI" id="CHEBI:15378"/>
        <dbReference type="ChEBI" id="CHEBI:15379"/>
        <dbReference type="ChEBI" id="CHEBI:30879"/>
        <dbReference type="ChEBI" id="CHEBI:57618"/>
        <dbReference type="ChEBI" id="CHEBI:58210"/>
        <dbReference type="ChEBI" id="CHEBI:142491"/>
        <dbReference type="EC" id="1.14.14.1"/>
    </reaction>
</comment>
<comment type="cofactor">
    <cofactor evidence="1">
        <name>heme</name>
        <dbReference type="ChEBI" id="CHEBI:30413"/>
    </cofactor>
</comment>
<comment type="subcellular location">
    <subcellularLocation>
        <location>Endoplasmic reticulum membrane</location>
        <topology>Peripheral membrane protein</topology>
    </subcellularLocation>
    <subcellularLocation>
        <location>Microsome membrane</location>
        <topology>Peripheral membrane protein</topology>
    </subcellularLocation>
</comment>
<comment type="induction">
    <text>P450 can be induced to high levels in liver and other tissues by various foreign compounds, including drugs, pesticides, and carcinogens.</text>
</comment>
<comment type="similarity">
    <text evidence="2">Belongs to the cytochrome P450 family.</text>
</comment>
<proteinExistence type="evidence at transcript level"/>
<dbReference type="EC" id="1.14.14.1"/>
<dbReference type="EMBL" id="D16363">
    <property type="protein sequence ID" value="BAA03865.1"/>
    <property type="molecule type" value="mRNA"/>
</dbReference>
<dbReference type="EMBL" id="D49731">
    <property type="protein sequence ID" value="BAA08568.1"/>
    <property type="molecule type" value="mRNA"/>
</dbReference>
<dbReference type="RefSeq" id="NP_001166587.1">
    <property type="nucleotide sequence ID" value="NM_001173116.1"/>
</dbReference>
<dbReference type="SMR" id="Q64417"/>
<dbReference type="STRING" id="10141.ENSCPOP00000001435"/>
<dbReference type="GeneID" id="100379244"/>
<dbReference type="KEGG" id="cpoc:100379244"/>
<dbReference type="CTD" id="100379244"/>
<dbReference type="eggNOG" id="KOG0158">
    <property type="taxonomic scope" value="Eukaryota"/>
</dbReference>
<dbReference type="InParanoid" id="Q64417"/>
<dbReference type="OrthoDB" id="1470350at2759"/>
<dbReference type="Proteomes" id="UP000005447">
    <property type="component" value="Unassembled WGS sequence"/>
</dbReference>
<dbReference type="GO" id="GO:0005789">
    <property type="term" value="C:endoplasmic reticulum membrane"/>
    <property type="evidence" value="ECO:0007669"/>
    <property type="project" value="UniProtKB-SubCell"/>
</dbReference>
<dbReference type="GO" id="GO:0020037">
    <property type="term" value="F:heme binding"/>
    <property type="evidence" value="ECO:0007669"/>
    <property type="project" value="InterPro"/>
</dbReference>
<dbReference type="GO" id="GO:0005506">
    <property type="term" value="F:iron ion binding"/>
    <property type="evidence" value="ECO:0007669"/>
    <property type="project" value="InterPro"/>
</dbReference>
<dbReference type="GO" id="GO:0016712">
    <property type="term" value="F:oxidoreductase activity, acting on paired donors, with incorporation or reduction of molecular oxygen, reduced flavin or flavoprotein as one donor, and incorporation of one atom of oxygen"/>
    <property type="evidence" value="ECO:0007669"/>
    <property type="project" value="UniProtKB-EC"/>
</dbReference>
<dbReference type="GO" id="GO:0050649">
    <property type="term" value="F:testosterone 6-beta-hydroxylase activity"/>
    <property type="evidence" value="ECO:0007669"/>
    <property type="project" value="TreeGrafter"/>
</dbReference>
<dbReference type="GO" id="GO:0070989">
    <property type="term" value="P:oxidative demethylation"/>
    <property type="evidence" value="ECO:0007669"/>
    <property type="project" value="TreeGrafter"/>
</dbReference>
<dbReference type="GO" id="GO:0008202">
    <property type="term" value="P:steroid metabolic process"/>
    <property type="evidence" value="ECO:0007669"/>
    <property type="project" value="TreeGrafter"/>
</dbReference>
<dbReference type="CDD" id="cd20650">
    <property type="entry name" value="CYP3A"/>
    <property type="match status" value="1"/>
</dbReference>
<dbReference type="FunFam" id="1.10.630.10:FF:000096">
    <property type="entry name" value="Cytochrome P450 3A4"/>
    <property type="match status" value="1"/>
</dbReference>
<dbReference type="Gene3D" id="1.10.630.10">
    <property type="entry name" value="Cytochrome P450"/>
    <property type="match status" value="1"/>
</dbReference>
<dbReference type="InterPro" id="IPR001128">
    <property type="entry name" value="Cyt_P450"/>
</dbReference>
<dbReference type="InterPro" id="IPR017972">
    <property type="entry name" value="Cyt_P450_CS"/>
</dbReference>
<dbReference type="InterPro" id="IPR008072">
    <property type="entry name" value="Cyt_P450_E_CYP3A"/>
</dbReference>
<dbReference type="InterPro" id="IPR002402">
    <property type="entry name" value="Cyt_P450_E_grp-II"/>
</dbReference>
<dbReference type="InterPro" id="IPR036396">
    <property type="entry name" value="Cyt_P450_sf"/>
</dbReference>
<dbReference type="InterPro" id="IPR050705">
    <property type="entry name" value="Cytochrome_P450_3A"/>
</dbReference>
<dbReference type="PANTHER" id="PTHR24302:SF38">
    <property type="entry name" value="CYTOCHROME P450 3A5"/>
    <property type="match status" value="1"/>
</dbReference>
<dbReference type="PANTHER" id="PTHR24302">
    <property type="entry name" value="CYTOCHROME P450 FAMILY 3"/>
    <property type="match status" value="1"/>
</dbReference>
<dbReference type="Pfam" id="PF00067">
    <property type="entry name" value="p450"/>
    <property type="match status" value="1"/>
</dbReference>
<dbReference type="PRINTS" id="PR00464">
    <property type="entry name" value="EP450II"/>
</dbReference>
<dbReference type="PRINTS" id="PR01689">
    <property type="entry name" value="EP450IICYP3A"/>
</dbReference>
<dbReference type="PRINTS" id="PR00385">
    <property type="entry name" value="P450"/>
</dbReference>
<dbReference type="SUPFAM" id="SSF48264">
    <property type="entry name" value="Cytochrome P450"/>
    <property type="match status" value="1"/>
</dbReference>
<dbReference type="PROSITE" id="PS00086">
    <property type="entry name" value="CYTOCHROME_P450"/>
    <property type="match status" value="1"/>
</dbReference>
<gene>
    <name type="primary">CYP3A14</name>
</gene>
<protein>
    <recommendedName>
        <fullName>Cytochrome P450 3A14</fullName>
        <ecNumber>1.14.14.1</ecNumber>
    </recommendedName>
    <alternativeName>
        <fullName>CYPIIIA14</fullName>
    </alternativeName>
</protein>
<organism>
    <name type="scientific">Cavia porcellus</name>
    <name type="common">Guinea pig</name>
    <dbReference type="NCBI Taxonomy" id="10141"/>
    <lineage>
        <taxon>Eukaryota</taxon>
        <taxon>Metazoa</taxon>
        <taxon>Chordata</taxon>
        <taxon>Craniata</taxon>
        <taxon>Vertebrata</taxon>
        <taxon>Euteleostomi</taxon>
        <taxon>Mammalia</taxon>
        <taxon>Eutheria</taxon>
        <taxon>Euarchontoglires</taxon>
        <taxon>Glires</taxon>
        <taxon>Rodentia</taxon>
        <taxon>Hystricomorpha</taxon>
        <taxon>Caviidae</taxon>
        <taxon>Cavia</taxon>
    </lineage>
</organism>
<accession>Q64417</accession>
<accession>Q64407</accession>